<proteinExistence type="inferred from homology"/>
<name>ATP8_MYXGL</name>
<protein>
    <recommendedName>
        <fullName evidence="1">ATP synthase F(0) complex subunit 8</fullName>
    </recommendedName>
    <alternativeName>
        <fullName>A6L</fullName>
    </alternativeName>
    <alternativeName>
        <fullName>F-ATPase subunit 8</fullName>
    </alternativeName>
</protein>
<geneLocation type="mitochondrion"/>
<sequence length="54" mass="6126">MPQLNPSPWLLMALSLWVCFPLMMLSLSSFLPLTLKTSLPSTLKSSPNPWILPW</sequence>
<reference key="1">
    <citation type="journal article" date="1998" name="J. Mol. Evol.">
        <title>The mitochondrial DNA molecule of the hagfish (Myxine glutinosa) and vertebrate phylogeny.</title>
        <authorList>
            <person name="Rasmussen A.S."/>
            <person name="Janke A."/>
            <person name="Arnason U."/>
        </authorList>
    </citation>
    <scope>NUCLEOTIDE SEQUENCE [GENOMIC DNA]</scope>
</reference>
<reference key="2">
    <citation type="journal article" date="2001" name="J. Mol. Evol.">
        <title>The complete mitochondrial genome of the hagfish Myxine glutinosa: unique features of the control region.</title>
        <authorList>
            <person name="Delarbre C."/>
            <person name="Rasmussen A.S."/>
            <person name="Arnason U."/>
            <person name="Gachelin G."/>
        </authorList>
    </citation>
    <scope>NUCLEOTIDE SEQUENCE [GENOMIC DNA]</scope>
</reference>
<organism>
    <name type="scientific">Myxine glutinosa</name>
    <name type="common">Atlantic hagfish</name>
    <dbReference type="NCBI Taxonomy" id="7769"/>
    <lineage>
        <taxon>Eukaryota</taxon>
        <taxon>Metazoa</taxon>
        <taxon>Chordata</taxon>
        <taxon>Craniata</taxon>
        <taxon>Vertebrata</taxon>
        <taxon>Cyclostomata</taxon>
        <taxon>Myxini</taxon>
        <taxon>Myxiniformes</taxon>
        <taxon>Myxinidae</taxon>
        <taxon>Myxininae</taxon>
        <taxon>Myxine</taxon>
    </lineage>
</organism>
<dbReference type="EMBL" id="Y15181">
    <property type="protein sequence ID" value="CAA75480.1"/>
    <property type="molecule type" value="Genomic_DNA"/>
</dbReference>
<dbReference type="EMBL" id="AJ404477">
    <property type="protein sequence ID" value="CAC20653.1"/>
    <property type="molecule type" value="Genomic_DNA"/>
</dbReference>
<dbReference type="RefSeq" id="NP_073277.1">
    <property type="nucleotide sequence ID" value="NC_002639.1"/>
</dbReference>
<dbReference type="SMR" id="O63913"/>
<dbReference type="GeneID" id="802349"/>
<dbReference type="CTD" id="4509"/>
<dbReference type="GO" id="GO:0031966">
    <property type="term" value="C:mitochondrial membrane"/>
    <property type="evidence" value="ECO:0007669"/>
    <property type="project" value="UniProtKB-SubCell"/>
</dbReference>
<dbReference type="GO" id="GO:0045259">
    <property type="term" value="C:proton-transporting ATP synthase complex"/>
    <property type="evidence" value="ECO:0007669"/>
    <property type="project" value="UniProtKB-KW"/>
</dbReference>
<dbReference type="GO" id="GO:0015078">
    <property type="term" value="F:proton transmembrane transporter activity"/>
    <property type="evidence" value="ECO:0007669"/>
    <property type="project" value="InterPro"/>
</dbReference>
<dbReference type="GO" id="GO:0015986">
    <property type="term" value="P:proton motive force-driven ATP synthesis"/>
    <property type="evidence" value="ECO:0007669"/>
    <property type="project" value="InterPro"/>
</dbReference>
<dbReference type="InterPro" id="IPR001421">
    <property type="entry name" value="ATP8_metazoa"/>
</dbReference>
<dbReference type="Pfam" id="PF00895">
    <property type="entry name" value="ATP-synt_8"/>
    <property type="match status" value="1"/>
</dbReference>
<comment type="function">
    <text evidence="1 2">Subunit 8, of the mitochondrial membrane ATP synthase complex (F(1)F(0) ATP synthase or Complex V) that produces ATP from ADP in the presence of a proton gradient across the membrane which is generated by electron transport complexes of the respiratory chain. ATP synthase complex consist of a soluble F(1) head domain - the catalytic core - and a membrane F(1) domain - the membrane proton channel. These two domains are linked by a central stalk rotating inside the F(1) region and a stationary peripheral stalk. During catalysis, ATP synthesis in the catalytic domain of F(1) is coupled via a rotary mechanism of the central stalk subunits to proton translocation (By similarity). In vivo, can only synthesize ATP although its ATP hydrolase activity can be activated artificially in vitro (By similarity). Part of the complex F(0) domain (By similarity).</text>
</comment>
<comment type="subunit">
    <text evidence="1">Component of the ATP synthase complex composed at least of ATP5F1A/subunit alpha, ATP5F1B/subunit beta, ATP5MC1/subunit c (homooctomer), MT-ATP6/subunit a, MT-ATP8/subunit 8, ATP5ME/subunit e, ATP5MF/subunit f, ATP5MG/subunit g, ATP5MK/subunit k, ATP5MJ/subunit j, ATP5F1C/subunit gamma, ATP5F1D/subunit delta, ATP5F1E/subunit epsilon, ATP5PF/subunit F6, ATP5PB/subunit b, ATP5PD/subunit d, ATP5PO/subunit OSCP. ATP synthase complex consists of a soluble F(1) head domain (subunits alpha(3) and beta(3)) - the catalytic core - and a membrane F(0) domain - the membrane proton channel (subunits c, a, 8, e, f, g, k and j). These two domains are linked by a central stalk (subunits gamma, delta, and epsilon) rotating inside the F1 region and a stationary peripheral stalk (subunits F6, b, d, and OSCP).</text>
</comment>
<comment type="subcellular location">
    <subcellularLocation>
        <location>Mitochondrion membrane</location>
        <topology>Single-pass membrane protein</topology>
    </subcellularLocation>
</comment>
<comment type="similarity">
    <text evidence="4">Belongs to the ATPase protein 8 family.</text>
</comment>
<evidence type="ECO:0000250" key="1">
    <source>
        <dbReference type="UniProtKB" id="P03928"/>
    </source>
</evidence>
<evidence type="ECO:0000250" key="2">
    <source>
        <dbReference type="UniProtKB" id="P19483"/>
    </source>
</evidence>
<evidence type="ECO:0000255" key="3"/>
<evidence type="ECO:0000305" key="4"/>
<accession>O63913</accession>
<gene>
    <name evidence="1" type="primary">MT-ATP8</name>
    <name type="synonym">ATP8</name>
    <name type="synonym">ATPASE8</name>
    <name type="synonym">MTATP8</name>
</gene>
<feature type="chain" id="PRO_0000195554" description="ATP synthase F(0) complex subunit 8">
    <location>
        <begin position="1"/>
        <end position="54"/>
    </location>
</feature>
<feature type="transmembrane region" description="Helical" evidence="3">
    <location>
        <begin position="13"/>
        <end position="35"/>
    </location>
</feature>
<keyword id="KW-0066">ATP synthesis</keyword>
<keyword id="KW-0138">CF(0)</keyword>
<keyword id="KW-0375">Hydrogen ion transport</keyword>
<keyword id="KW-0406">Ion transport</keyword>
<keyword id="KW-0472">Membrane</keyword>
<keyword id="KW-0496">Mitochondrion</keyword>
<keyword id="KW-0812">Transmembrane</keyword>
<keyword id="KW-1133">Transmembrane helix</keyword>
<keyword id="KW-0813">Transport</keyword>